<dbReference type="EC" id="6.3.5.2" evidence="1"/>
<dbReference type="EMBL" id="AE017261">
    <property type="protein sequence ID" value="AAT43927.1"/>
    <property type="status" value="ALT_INIT"/>
    <property type="molecule type" value="Genomic_DNA"/>
</dbReference>
<dbReference type="RefSeq" id="WP_048059640.1">
    <property type="nucleotide sequence ID" value="NC_005877.1"/>
</dbReference>
<dbReference type="SMR" id="Q6KZC5"/>
<dbReference type="FunCoup" id="Q6KZC5">
    <property type="interactions" value="29"/>
</dbReference>
<dbReference type="STRING" id="263820.PTO1342"/>
<dbReference type="MEROPS" id="C26.A31"/>
<dbReference type="PaxDb" id="263820-PTO1342"/>
<dbReference type="GeneID" id="2845133"/>
<dbReference type="KEGG" id="pto:PTO1342"/>
<dbReference type="eggNOG" id="arCOG00087">
    <property type="taxonomic scope" value="Archaea"/>
</dbReference>
<dbReference type="HOGENOM" id="CLU_014340_1_4_2"/>
<dbReference type="InParanoid" id="Q6KZC5"/>
<dbReference type="UniPathway" id="UPA00189">
    <property type="reaction ID" value="UER00296"/>
</dbReference>
<dbReference type="Proteomes" id="UP000000438">
    <property type="component" value="Chromosome"/>
</dbReference>
<dbReference type="GO" id="GO:0005829">
    <property type="term" value="C:cytosol"/>
    <property type="evidence" value="ECO:0007669"/>
    <property type="project" value="TreeGrafter"/>
</dbReference>
<dbReference type="GO" id="GO:0005524">
    <property type="term" value="F:ATP binding"/>
    <property type="evidence" value="ECO:0007669"/>
    <property type="project" value="UniProtKB-KW"/>
</dbReference>
<dbReference type="GO" id="GO:0003921">
    <property type="term" value="F:GMP synthase activity"/>
    <property type="evidence" value="ECO:0007669"/>
    <property type="project" value="TreeGrafter"/>
</dbReference>
<dbReference type="FunFam" id="3.40.50.880:FF:000047">
    <property type="entry name" value="GMP synthase [glutamine-hydrolyzing] subunit A"/>
    <property type="match status" value="1"/>
</dbReference>
<dbReference type="Gene3D" id="3.40.50.880">
    <property type="match status" value="1"/>
</dbReference>
<dbReference type="HAMAP" id="MF_01510">
    <property type="entry name" value="GMP_synthase_A"/>
    <property type="match status" value="1"/>
</dbReference>
<dbReference type="InterPro" id="IPR029062">
    <property type="entry name" value="Class_I_gatase-like"/>
</dbReference>
<dbReference type="InterPro" id="IPR017926">
    <property type="entry name" value="GATASE"/>
</dbReference>
<dbReference type="InterPro" id="IPR004739">
    <property type="entry name" value="GMP_synth_GATase"/>
</dbReference>
<dbReference type="InterPro" id="IPR023686">
    <property type="entry name" value="GMP_synthase_A"/>
</dbReference>
<dbReference type="NCBIfam" id="TIGR00888">
    <property type="entry name" value="guaA_Nterm"/>
    <property type="match status" value="1"/>
</dbReference>
<dbReference type="NCBIfam" id="NF001975">
    <property type="entry name" value="PRK00758.1"/>
    <property type="match status" value="1"/>
</dbReference>
<dbReference type="PANTHER" id="PTHR11922:SF2">
    <property type="entry name" value="GMP SYNTHASE [GLUTAMINE-HYDROLYZING]"/>
    <property type="match status" value="1"/>
</dbReference>
<dbReference type="PANTHER" id="PTHR11922">
    <property type="entry name" value="GMP SYNTHASE-RELATED"/>
    <property type="match status" value="1"/>
</dbReference>
<dbReference type="Pfam" id="PF00117">
    <property type="entry name" value="GATase"/>
    <property type="match status" value="1"/>
</dbReference>
<dbReference type="PRINTS" id="PR00097">
    <property type="entry name" value="ANTSNTHASEII"/>
</dbReference>
<dbReference type="PRINTS" id="PR00099">
    <property type="entry name" value="CPSGATASE"/>
</dbReference>
<dbReference type="PRINTS" id="PR00096">
    <property type="entry name" value="GATASE"/>
</dbReference>
<dbReference type="SUPFAM" id="SSF52317">
    <property type="entry name" value="Class I glutamine amidotransferase-like"/>
    <property type="match status" value="1"/>
</dbReference>
<dbReference type="PROSITE" id="PS51273">
    <property type="entry name" value="GATASE_TYPE_1"/>
    <property type="match status" value="1"/>
</dbReference>
<name>GUAAA_PICTO</name>
<reference key="1">
    <citation type="journal article" date="2004" name="Proc. Natl. Acad. Sci. U.S.A.">
        <title>Genome sequence of Picrophilus torridus and its implications for life around pH 0.</title>
        <authorList>
            <person name="Fuetterer O."/>
            <person name="Angelov A."/>
            <person name="Liesegang H."/>
            <person name="Gottschalk G."/>
            <person name="Schleper C."/>
            <person name="Schepers B."/>
            <person name="Dock C."/>
            <person name="Antranikian G."/>
            <person name="Liebl W."/>
        </authorList>
    </citation>
    <scope>NUCLEOTIDE SEQUENCE [LARGE SCALE GENOMIC DNA]</scope>
    <source>
        <strain>ATCC 700027 / DSM 9790 / JCM 10055 / NBRC 100828 / KAW 2/3</strain>
    </source>
</reference>
<organism>
    <name type="scientific">Picrophilus torridus (strain ATCC 700027 / DSM 9790 / JCM 10055 / NBRC 100828 / KAW 2/3)</name>
    <dbReference type="NCBI Taxonomy" id="1122961"/>
    <lineage>
        <taxon>Archaea</taxon>
        <taxon>Methanobacteriati</taxon>
        <taxon>Thermoplasmatota</taxon>
        <taxon>Thermoplasmata</taxon>
        <taxon>Thermoplasmatales</taxon>
        <taxon>Picrophilaceae</taxon>
        <taxon>Picrophilus</taxon>
    </lineage>
</organism>
<protein>
    <recommendedName>
        <fullName evidence="1">GMP synthase [glutamine-hydrolyzing] subunit A</fullName>
        <ecNumber evidence="1">6.3.5.2</ecNumber>
    </recommendedName>
    <alternativeName>
        <fullName evidence="1">Glutamine amidotransferase</fullName>
    </alternativeName>
</protein>
<sequence>MKIYIIDNGGQWTHREWRTVRDLGVDSTIVPNTVDADVLADADGIILSGGPASIESEISKLGNIKEYMHRYNYPVLGICVGAQFIAIDSGGRVSKALHAEYGKKIVNFTSKDGIFYNIPDSINAWENHNDEIKSISDDYIICAYSDTCRVQAFYHKNRDIFGVQFHPEVNNTEHGTTIFKNFIEKCRR</sequence>
<accession>Q6KZC5</accession>
<proteinExistence type="inferred from homology"/>
<feature type="chain" id="PRO_0000140227" description="GMP synthase [glutamine-hydrolyzing] subunit A">
    <location>
        <begin position="1"/>
        <end position="188"/>
    </location>
</feature>
<feature type="domain" description="Glutamine amidotransferase type-1" evidence="1">
    <location>
        <begin position="2"/>
        <end position="188"/>
    </location>
</feature>
<feature type="active site" description="Nucleophile" evidence="1">
    <location>
        <position position="79"/>
    </location>
</feature>
<feature type="active site" evidence="1">
    <location>
        <position position="166"/>
    </location>
</feature>
<feature type="active site" evidence="1">
    <location>
        <position position="168"/>
    </location>
</feature>
<comment type="function">
    <text evidence="1">Catalyzes the synthesis of GMP from XMP.</text>
</comment>
<comment type="catalytic activity">
    <reaction evidence="1">
        <text>XMP + L-glutamine + ATP + H2O = GMP + L-glutamate + AMP + diphosphate + 2 H(+)</text>
        <dbReference type="Rhea" id="RHEA:11680"/>
        <dbReference type="ChEBI" id="CHEBI:15377"/>
        <dbReference type="ChEBI" id="CHEBI:15378"/>
        <dbReference type="ChEBI" id="CHEBI:29985"/>
        <dbReference type="ChEBI" id="CHEBI:30616"/>
        <dbReference type="ChEBI" id="CHEBI:33019"/>
        <dbReference type="ChEBI" id="CHEBI:57464"/>
        <dbReference type="ChEBI" id="CHEBI:58115"/>
        <dbReference type="ChEBI" id="CHEBI:58359"/>
        <dbReference type="ChEBI" id="CHEBI:456215"/>
        <dbReference type="EC" id="6.3.5.2"/>
    </reaction>
</comment>
<comment type="pathway">
    <text evidence="1">Purine metabolism; GMP biosynthesis; GMP from XMP (L-Gln route): step 1/1.</text>
</comment>
<comment type="subunit">
    <text evidence="1">Heterodimer composed of a glutamine amidotransferase subunit (A) and a GMP-binding subunit (B).</text>
</comment>
<comment type="sequence caution" evidence="2">
    <conflict type="erroneous initiation">
        <sequence resource="EMBL-CDS" id="AAT43927"/>
    </conflict>
</comment>
<evidence type="ECO:0000255" key="1">
    <source>
        <dbReference type="HAMAP-Rule" id="MF_01510"/>
    </source>
</evidence>
<evidence type="ECO:0000305" key="2"/>
<gene>
    <name evidence="1" type="primary">guaAA</name>
    <name type="ordered locus">PTO1342</name>
</gene>
<keyword id="KW-0067">ATP-binding</keyword>
<keyword id="KW-0315">Glutamine amidotransferase</keyword>
<keyword id="KW-0332">GMP biosynthesis</keyword>
<keyword id="KW-0436">Ligase</keyword>
<keyword id="KW-0547">Nucleotide-binding</keyword>
<keyword id="KW-0658">Purine biosynthesis</keyword>